<sequence>MQIWHMEPFPCGDRRLPHHVFPPKKITTTQLGQLAGVQYYKVDLDDTASMKKRLSAVKTEKNVTFTDMFTVSETMLEFDDKMEQFYEPQVQKEDVISLVVEGTCYYDVEPEDDSWIRVQVEKGDLIVIPKGLSHRFTTTPQNFVKIQRFFSRKVEGNQG</sequence>
<keyword id="KW-0963">Cytoplasm</keyword>
<keyword id="KW-0539">Nucleus</keyword>
<keyword id="KW-1185">Reference proteome</keyword>
<reference key="1">
    <citation type="journal article" date="1998" name="Science">
        <title>Genome sequence of the nematode C. elegans: a platform for investigating biology.</title>
        <authorList>
            <consortium name="The C. elegans sequencing consortium"/>
        </authorList>
    </citation>
    <scope>NUCLEOTIDE SEQUENCE [LARGE SCALE GENOMIC DNA]</scope>
    <source>
        <strain>Bristol N2</strain>
    </source>
</reference>
<gene>
    <name type="ORF">T01D1.4</name>
</gene>
<protein>
    <recommendedName>
        <fullName evidence="1">Probable inactive acireductone dioxygenase 1</fullName>
    </recommendedName>
</protein>
<proteinExistence type="inferred from homology"/>
<name>MTND1_CAEEL</name>
<accession>P91416</accession>
<feature type="chain" id="PRO_0000414335" description="Probable inactive acireductone dioxygenase 1">
    <location>
        <begin position="1"/>
        <end position="159"/>
    </location>
</feature>
<evidence type="ECO:0000255" key="1">
    <source>
        <dbReference type="HAMAP-Rule" id="MF_03154"/>
    </source>
</evidence>
<evidence type="ECO:0000305" key="2"/>
<dbReference type="EMBL" id="FO081419">
    <property type="protein sequence ID" value="CCD71494.1"/>
    <property type="molecule type" value="Genomic_DNA"/>
</dbReference>
<dbReference type="PIR" id="T29472">
    <property type="entry name" value="T29472"/>
</dbReference>
<dbReference type="RefSeq" id="NP_493676.1">
    <property type="nucleotide sequence ID" value="NM_061275.9"/>
</dbReference>
<dbReference type="SMR" id="P91416"/>
<dbReference type="BioGRID" id="38783">
    <property type="interactions" value="1"/>
</dbReference>
<dbReference type="FunCoup" id="P91416">
    <property type="interactions" value="40"/>
</dbReference>
<dbReference type="STRING" id="6239.T01D1.4a.1"/>
<dbReference type="PaxDb" id="6239-T01D1.4"/>
<dbReference type="PeptideAtlas" id="P91416"/>
<dbReference type="EnsemblMetazoa" id="T01D1.4a.1">
    <property type="protein sequence ID" value="T01D1.4a.1"/>
    <property type="gene ID" value="WBGene00020149"/>
</dbReference>
<dbReference type="GeneID" id="173403"/>
<dbReference type="KEGG" id="cel:CELE_T01D1.4"/>
<dbReference type="UCSC" id="T01D1.4">
    <property type="organism name" value="c. elegans"/>
</dbReference>
<dbReference type="AGR" id="WB:WBGene00020149"/>
<dbReference type="CTD" id="173403"/>
<dbReference type="WormBase" id="T01D1.4a">
    <property type="protein sequence ID" value="CE12948"/>
    <property type="gene ID" value="WBGene00020149"/>
</dbReference>
<dbReference type="eggNOG" id="KOG2107">
    <property type="taxonomic scope" value="Eukaryota"/>
</dbReference>
<dbReference type="GeneTree" id="ENSGT00390000008195"/>
<dbReference type="HOGENOM" id="CLU_090154_2_0_1"/>
<dbReference type="InParanoid" id="P91416"/>
<dbReference type="OMA" id="YYKVDLD"/>
<dbReference type="OrthoDB" id="1867259at2759"/>
<dbReference type="PhylomeDB" id="P91416"/>
<dbReference type="PRO" id="PR:P91416"/>
<dbReference type="Proteomes" id="UP000001940">
    <property type="component" value="Chromosome II"/>
</dbReference>
<dbReference type="Bgee" id="WBGene00020149">
    <property type="expression patterns" value="Expressed in larva and 4 other cell types or tissues"/>
</dbReference>
<dbReference type="ExpressionAtlas" id="P91416">
    <property type="expression patterns" value="baseline and differential"/>
</dbReference>
<dbReference type="GO" id="GO:0005737">
    <property type="term" value="C:cytoplasm"/>
    <property type="evidence" value="ECO:0007669"/>
    <property type="project" value="UniProtKB-SubCell"/>
</dbReference>
<dbReference type="GO" id="GO:0005634">
    <property type="term" value="C:nucleus"/>
    <property type="evidence" value="ECO:0007669"/>
    <property type="project" value="UniProtKB-SubCell"/>
</dbReference>
<dbReference type="GO" id="GO:0010309">
    <property type="term" value="F:acireductone dioxygenase [iron(II)-requiring] activity"/>
    <property type="evidence" value="ECO:0000318"/>
    <property type="project" value="GO_Central"/>
</dbReference>
<dbReference type="GO" id="GO:0019509">
    <property type="term" value="P:L-methionine salvage from methylthioadenosine"/>
    <property type="evidence" value="ECO:0007669"/>
    <property type="project" value="InterPro"/>
</dbReference>
<dbReference type="GO" id="GO:0006555">
    <property type="term" value="P:methionine metabolic process"/>
    <property type="evidence" value="ECO:0000318"/>
    <property type="project" value="GO_Central"/>
</dbReference>
<dbReference type="CDD" id="cd02232">
    <property type="entry name" value="cupin_ARD"/>
    <property type="match status" value="1"/>
</dbReference>
<dbReference type="FunFam" id="2.60.120.10:FF:000149">
    <property type="entry name" value="1,2-dihydroxy-3-keto-5-methylthiopentene dioxygenase homolog"/>
    <property type="match status" value="1"/>
</dbReference>
<dbReference type="Gene3D" id="2.60.120.10">
    <property type="entry name" value="Jelly Rolls"/>
    <property type="match status" value="1"/>
</dbReference>
<dbReference type="HAMAP" id="MF_03154">
    <property type="entry name" value="Salvage_MtnD_euk"/>
    <property type="match status" value="1"/>
</dbReference>
<dbReference type="InterPro" id="IPR004313">
    <property type="entry name" value="ARD"/>
</dbReference>
<dbReference type="InterPro" id="IPR027496">
    <property type="entry name" value="ARD_euk"/>
</dbReference>
<dbReference type="InterPro" id="IPR014710">
    <property type="entry name" value="RmlC-like_jellyroll"/>
</dbReference>
<dbReference type="InterPro" id="IPR011051">
    <property type="entry name" value="RmlC_Cupin_sf"/>
</dbReference>
<dbReference type="PANTHER" id="PTHR23418">
    <property type="entry name" value="ACIREDUCTONE DIOXYGENASE"/>
    <property type="match status" value="1"/>
</dbReference>
<dbReference type="PANTHER" id="PTHR23418:SF10">
    <property type="entry name" value="INACTIVE ACIREDUCTONE DIOXYGENASE 1-RELATED"/>
    <property type="match status" value="1"/>
</dbReference>
<dbReference type="Pfam" id="PF03079">
    <property type="entry name" value="ARD"/>
    <property type="match status" value="1"/>
</dbReference>
<dbReference type="SUPFAM" id="SSF51182">
    <property type="entry name" value="RmlC-like cupins"/>
    <property type="match status" value="1"/>
</dbReference>
<comment type="function">
    <text evidence="1">Probable inactive acireductone dioxygenase.</text>
</comment>
<comment type="subcellular location">
    <subcellularLocation>
        <location evidence="1">Cytoplasm</location>
    </subcellularLocation>
    <subcellularLocation>
        <location evidence="1">Nucleus</location>
    </subcellularLocation>
</comment>
<comment type="similarity">
    <text evidence="1">Belongs to the acireductone dioxygenase (ARD) family.</text>
</comment>
<comment type="caution">
    <text evidence="2">This enzyme lacks one or more conserved metal-binding sites. It may be non-functional.</text>
</comment>
<organism>
    <name type="scientific">Caenorhabditis elegans</name>
    <dbReference type="NCBI Taxonomy" id="6239"/>
    <lineage>
        <taxon>Eukaryota</taxon>
        <taxon>Metazoa</taxon>
        <taxon>Ecdysozoa</taxon>
        <taxon>Nematoda</taxon>
        <taxon>Chromadorea</taxon>
        <taxon>Rhabditida</taxon>
        <taxon>Rhabditina</taxon>
        <taxon>Rhabditomorpha</taxon>
        <taxon>Rhabditoidea</taxon>
        <taxon>Rhabditidae</taxon>
        <taxon>Peloderinae</taxon>
        <taxon>Caenorhabditis</taxon>
    </lineage>
</organism>